<feature type="signal peptide" evidence="4">
    <location>
        <begin position="1"/>
        <end position="23"/>
    </location>
</feature>
<feature type="chain" id="PRO_0000370205" description="E3 ubiquitin-protein ligase hrd-1" evidence="4">
    <location>
        <begin position="24"/>
        <end position="622"/>
    </location>
</feature>
<feature type="topological domain" description="Lumenal" evidence="4">
    <location>
        <begin position="24"/>
        <end position="41"/>
    </location>
</feature>
<feature type="transmembrane region" description="Helical" evidence="4">
    <location>
        <begin position="42"/>
        <end position="62"/>
    </location>
</feature>
<feature type="topological domain" description="Cytoplasmic" evidence="4">
    <location>
        <begin position="63"/>
        <end position="99"/>
    </location>
</feature>
<feature type="transmembrane region" description="Helical" evidence="4">
    <location>
        <begin position="100"/>
        <end position="120"/>
    </location>
</feature>
<feature type="topological domain" description="Lumenal" evidence="4">
    <location>
        <begin position="121"/>
        <end position="141"/>
    </location>
</feature>
<feature type="transmembrane region" description="Helical" evidence="4">
    <location>
        <begin position="142"/>
        <end position="162"/>
    </location>
</feature>
<feature type="topological domain" description="Cytoplasmic" evidence="4">
    <location>
        <begin position="163"/>
        <end position="170"/>
    </location>
</feature>
<feature type="transmembrane region" description="Helical" evidence="4">
    <location>
        <begin position="171"/>
        <end position="191"/>
    </location>
</feature>
<feature type="topological domain" description="Lumenal" evidence="4">
    <location>
        <begin position="192"/>
        <end position="215"/>
    </location>
</feature>
<feature type="transmembrane region" description="Helical" evidence="4">
    <location>
        <begin position="216"/>
        <end position="236"/>
    </location>
</feature>
<feature type="topological domain" description="Cytoplasmic" evidence="4">
    <location>
        <begin position="237"/>
        <end position="622"/>
    </location>
</feature>
<feature type="zinc finger region" description="RING-type; atypical" evidence="5">
    <location>
        <begin position="292"/>
        <end position="333"/>
    </location>
</feature>
<feature type="region of interest" description="Disordered" evidence="6">
    <location>
        <begin position="436"/>
        <end position="463"/>
    </location>
</feature>
<feature type="region of interest" description="Disordered" evidence="6">
    <location>
        <begin position="514"/>
        <end position="622"/>
    </location>
</feature>
<feature type="compositionally biased region" description="Pro residues" evidence="6">
    <location>
        <begin position="436"/>
        <end position="445"/>
    </location>
</feature>
<feature type="compositionally biased region" description="Low complexity" evidence="6">
    <location>
        <begin position="526"/>
        <end position="538"/>
    </location>
</feature>
<feature type="compositionally biased region" description="Polar residues" evidence="6">
    <location>
        <begin position="562"/>
        <end position="577"/>
    </location>
</feature>
<feature type="compositionally biased region" description="Low complexity" evidence="6">
    <location>
        <begin position="579"/>
        <end position="596"/>
    </location>
</feature>
<sequence length="622" mass="68088">MRVSAGLMIGGSCVATAATVLNAFVINKQFYPSIVYLSKSNASMAVLYFQGIVLVYLMFQLLKSILFGDLRAAEAEHLSERTWHAVLETCLAFTVFRDDFSAMFVMQFIGLLFIKCFHWLADDRVDMMERSPVITLRFHLRMMTVLAALGFADSYFVSSAYFSTITKGASSQIVFGFEYAILLALVLHVTIKYLLHMHDLRNPQSWDNKAVYLLYAELLINLIRCVLYGFFAVIMLRVHTFPLFSVRPFYQSVRALHKAFLDVILSRRAINAMNSQFPVVSNDELSAMDATCIICREEMTVESSPKRLPCSHVFHAHCLRSWFQRQQTCPTCRTDIWQGRNGAAGGANAGGAAENNAAGAPPAAGIPPFLPFLGHQFGFPQAAAGAQVGGAQAGGHPGPFPHQIFYAPAPANRPEFMNLAPPPMPMAGPPGMFPMMPPPPIPQPNAAPGESSNAEPPGRPNFDRFSVEELHRMEGDMRDAILARIQAMENIMVILESAQVQMVQLAAITPLRRPVPTAEASEEETATASSVPTSVPSEEPSPAPSTPETASAPRSMFRGNLFNDTQSTSTPSTSAGPQPSLTPSTSSVPSTSSVRTPEADEVRQRRLAHLNARFPPPNPEHE</sequence>
<keyword id="KW-0256">Endoplasmic reticulum</keyword>
<keyword id="KW-0472">Membrane</keyword>
<keyword id="KW-0479">Metal-binding</keyword>
<keyword id="KW-1185">Reference proteome</keyword>
<keyword id="KW-0732">Signal</keyword>
<keyword id="KW-0808">Transferase</keyword>
<keyword id="KW-0812">Transmembrane</keyword>
<keyword id="KW-1133">Transmembrane helix</keyword>
<keyword id="KW-0833">Ubl conjugation pathway</keyword>
<keyword id="KW-0862">Zinc</keyword>
<keyword id="KW-0863">Zinc-finger</keyword>
<proteinExistence type="inferred from homology"/>
<comment type="function">
    <text evidence="1">Acts as an E3 ubiquitin-protein ligase which accepts ubiquitin specifically from endoplasmic reticulum-associated ubc-7 E2 ligase and transfers it to substrates, promoting their degradation. Component of the endoplasmic reticulum quality control (ERQC) system, which is also called the ER-associated degradation (ERAD) system, involved in ubiquitin-dependent degradation of misfolded endoplasmic reticulum proteins. Also promotes the degradation of normal but naturally short-lived proteins. Protects cells from ER stress-induced apoptosis. Thought to play a role together with hsp-3 in developmental growth and function of intestinal cells and to play a role together with hsp-4 in gonad formation (By similarity).</text>
</comment>
<comment type="catalytic activity">
    <reaction>
        <text>S-ubiquitinyl-[E2 ubiquitin-conjugating enzyme]-L-cysteine + [acceptor protein]-L-lysine = [E2 ubiquitin-conjugating enzyme]-L-cysteine + N(6)-ubiquitinyl-[acceptor protein]-L-lysine.</text>
        <dbReference type="EC" id="2.3.2.27"/>
    </reaction>
</comment>
<comment type="pathway">
    <text evidence="7">Protein modification; protein ubiquitination.</text>
</comment>
<comment type="subunit">
    <text evidence="3">Homodimer.</text>
</comment>
<comment type="subcellular location">
    <subcellularLocation>
        <location evidence="3">Endoplasmic reticulum membrane</location>
        <topology evidence="3">Multi-pass membrane protein</topology>
    </subcellularLocation>
</comment>
<comment type="domain">
    <text evidence="3">The RING-type zinc finger is required for E3 ligase activity.</text>
</comment>
<comment type="similarity">
    <text evidence="4">Belongs to the HRD1 family.</text>
</comment>
<name>HRD1_CAEBR</name>
<evidence type="ECO:0000250" key="1"/>
<evidence type="ECO:0000250" key="2">
    <source>
        <dbReference type="UniProtKB" id="Q20798"/>
    </source>
</evidence>
<evidence type="ECO:0000250" key="3">
    <source>
        <dbReference type="UniProtKB" id="Q86TM6"/>
    </source>
</evidence>
<evidence type="ECO:0000255" key="4"/>
<evidence type="ECO:0000255" key="5">
    <source>
        <dbReference type="PROSITE-ProRule" id="PRU00175"/>
    </source>
</evidence>
<evidence type="ECO:0000256" key="6">
    <source>
        <dbReference type="SAM" id="MobiDB-lite"/>
    </source>
</evidence>
<evidence type="ECO:0000305" key="7"/>
<evidence type="ECO:0000312" key="8">
    <source>
        <dbReference type="EMBL" id="CAP39732.2"/>
    </source>
</evidence>
<organism>
    <name type="scientific">Caenorhabditis briggsae</name>
    <dbReference type="NCBI Taxonomy" id="6238"/>
    <lineage>
        <taxon>Eukaryota</taxon>
        <taxon>Metazoa</taxon>
        <taxon>Ecdysozoa</taxon>
        <taxon>Nematoda</taxon>
        <taxon>Chromadorea</taxon>
        <taxon>Rhabditida</taxon>
        <taxon>Rhabditina</taxon>
        <taxon>Rhabditomorpha</taxon>
        <taxon>Rhabditoidea</taxon>
        <taxon>Rhabditidae</taxon>
        <taxon>Peloderinae</taxon>
        <taxon>Caenorhabditis</taxon>
    </lineage>
</organism>
<dbReference type="EC" id="2.3.2.27"/>
<dbReference type="EMBL" id="HE601533">
    <property type="protein sequence ID" value="CAP39732.2"/>
    <property type="molecule type" value="Genomic_DNA"/>
</dbReference>
<dbReference type="SMR" id="A8Y4B2"/>
<dbReference type="FunCoup" id="A8Y4B2">
    <property type="interactions" value="2118"/>
</dbReference>
<dbReference type="STRING" id="6238.A8Y4B2"/>
<dbReference type="EnsemblMetazoa" id="CBG23271.1">
    <property type="protein sequence ID" value="CBG23271.1"/>
    <property type="gene ID" value="WBGene00041655"/>
</dbReference>
<dbReference type="WormBase" id="CBG23271">
    <property type="protein sequence ID" value="CBP35436"/>
    <property type="gene ID" value="WBGene00041655"/>
    <property type="gene designation" value="Cbr-sel-11"/>
</dbReference>
<dbReference type="eggNOG" id="KOG0802">
    <property type="taxonomic scope" value="Eukaryota"/>
</dbReference>
<dbReference type="HOGENOM" id="CLU_009169_3_1_1"/>
<dbReference type="InParanoid" id="A8Y4B2"/>
<dbReference type="OMA" id="MQQYQGI"/>
<dbReference type="UniPathway" id="UPA00143"/>
<dbReference type="Proteomes" id="UP000008549">
    <property type="component" value="Unassembled WGS sequence"/>
</dbReference>
<dbReference type="GO" id="GO:0012505">
    <property type="term" value="C:endomembrane system"/>
    <property type="evidence" value="ECO:0000318"/>
    <property type="project" value="GO_Central"/>
</dbReference>
<dbReference type="GO" id="GO:0005789">
    <property type="term" value="C:endoplasmic reticulum membrane"/>
    <property type="evidence" value="ECO:0007669"/>
    <property type="project" value="UniProtKB-SubCell"/>
</dbReference>
<dbReference type="GO" id="GO:0044322">
    <property type="term" value="C:endoplasmic reticulum quality control compartment"/>
    <property type="evidence" value="ECO:0000318"/>
    <property type="project" value="GO_Central"/>
</dbReference>
<dbReference type="GO" id="GO:0061630">
    <property type="term" value="F:ubiquitin protein ligase activity"/>
    <property type="evidence" value="ECO:0000318"/>
    <property type="project" value="GO_Central"/>
</dbReference>
<dbReference type="GO" id="GO:0008270">
    <property type="term" value="F:zinc ion binding"/>
    <property type="evidence" value="ECO:0007669"/>
    <property type="project" value="UniProtKB-KW"/>
</dbReference>
<dbReference type="GO" id="GO:0036503">
    <property type="term" value="P:ERAD pathway"/>
    <property type="evidence" value="ECO:0000318"/>
    <property type="project" value="GO_Central"/>
</dbReference>
<dbReference type="GO" id="GO:0035264">
    <property type="term" value="P:multicellular organism growth"/>
    <property type="evidence" value="ECO:0007669"/>
    <property type="project" value="EnsemblMetazoa"/>
</dbReference>
<dbReference type="GO" id="GO:0043161">
    <property type="term" value="P:proteasome-mediated ubiquitin-dependent protein catabolic process"/>
    <property type="evidence" value="ECO:0000318"/>
    <property type="project" value="GO_Central"/>
</dbReference>
<dbReference type="GO" id="GO:0016567">
    <property type="term" value="P:protein ubiquitination"/>
    <property type="evidence" value="ECO:0007669"/>
    <property type="project" value="UniProtKB-UniPathway"/>
</dbReference>
<dbReference type="GO" id="GO:0010468">
    <property type="term" value="P:regulation of gene expression"/>
    <property type="evidence" value="ECO:0007669"/>
    <property type="project" value="EnsemblMetazoa"/>
</dbReference>
<dbReference type="GO" id="GO:0008593">
    <property type="term" value="P:regulation of Notch signaling pathway"/>
    <property type="evidence" value="ECO:0007669"/>
    <property type="project" value="EnsemblMetazoa"/>
</dbReference>
<dbReference type="CDD" id="cd16479">
    <property type="entry name" value="RING-H2_synoviolin"/>
    <property type="match status" value="1"/>
</dbReference>
<dbReference type="FunFam" id="3.30.40.10:FF:000088">
    <property type="entry name" value="E3 ubiquitin-protein ligase synoviolin"/>
    <property type="match status" value="1"/>
</dbReference>
<dbReference type="Gene3D" id="3.30.40.10">
    <property type="entry name" value="Zinc/RING finger domain, C3HC4 (zinc finger)"/>
    <property type="match status" value="1"/>
</dbReference>
<dbReference type="InterPro" id="IPR050731">
    <property type="entry name" value="HRD1_E3_ubiq-ligases"/>
</dbReference>
<dbReference type="InterPro" id="IPR001841">
    <property type="entry name" value="Znf_RING"/>
</dbReference>
<dbReference type="InterPro" id="IPR013083">
    <property type="entry name" value="Znf_RING/FYVE/PHD"/>
</dbReference>
<dbReference type="PANTHER" id="PTHR22763:SF184">
    <property type="entry name" value="E3 UBIQUITIN-PROTEIN LIGASE SYNOVIOLIN"/>
    <property type="match status" value="1"/>
</dbReference>
<dbReference type="PANTHER" id="PTHR22763">
    <property type="entry name" value="RING ZINC FINGER PROTEIN"/>
    <property type="match status" value="1"/>
</dbReference>
<dbReference type="Pfam" id="PF13639">
    <property type="entry name" value="zf-RING_2"/>
    <property type="match status" value="1"/>
</dbReference>
<dbReference type="SMART" id="SM00184">
    <property type="entry name" value="RING"/>
    <property type="match status" value="1"/>
</dbReference>
<dbReference type="SUPFAM" id="SSF57850">
    <property type="entry name" value="RING/U-box"/>
    <property type="match status" value="1"/>
</dbReference>
<dbReference type="PROSITE" id="PS50089">
    <property type="entry name" value="ZF_RING_2"/>
    <property type="match status" value="1"/>
</dbReference>
<accession>A8Y4B2</accession>
<gene>
    <name evidence="2" type="primary">sel-11</name>
    <name evidence="8" type="synonym">hrd-1</name>
    <name type="ORF">CBG23271</name>
</gene>
<protein>
    <recommendedName>
        <fullName evidence="2">E3 ubiquitin-protein ligase hrd-1</fullName>
        <ecNumber>2.3.2.27</ecNumber>
    </recommendedName>
    <alternativeName>
        <fullName evidence="7">RING-type E3 ubiquitin transferase hrd-1</fullName>
    </alternativeName>
    <alternativeName>
        <fullName evidence="2">Suppressor/enhancer of lin-12</fullName>
    </alternativeName>
</protein>
<reference evidence="8" key="1">
    <citation type="journal article" date="2003" name="PLoS Biol.">
        <title>The genome sequence of Caenorhabditis briggsae: a platform for comparative genomics.</title>
        <authorList>
            <person name="Stein L.D."/>
            <person name="Bao Z."/>
            <person name="Blasiar D."/>
            <person name="Blumenthal T."/>
            <person name="Brent M.R."/>
            <person name="Chen N."/>
            <person name="Chinwalla A."/>
            <person name="Clarke L."/>
            <person name="Clee C."/>
            <person name="Coghlan A."/>
            <person name="Coulson A."/>
            <person name="D'Eustachio P."/>
            <person name="Fitch D.H.A."/>
            <person name="Fulton L.A."/>
            <person name="Fulton R.E."/>
            <person name="Griffiths-Jones S."/>
            <person name="Harris T.W."/>
            <person name="Hillier L.W."/>
            <person name="Kamath R."/>
            <person name="Kuwabara P.E."/>
            <person name="Mardis E.R."/>
            <person name="Marra M.A."/>
            <person name="Miner T.L."/>
            <person name="Minx P."/>
            <person name="Mullikin J.C."/>
            <person name="Plumb R.W."/>
            <person name="Rogers J."/>
            <person name="Schein J.E."/>
            <person name="Sohrmann M."/>
            <person name="Spieth J."/>
            <person name="Stajich J.E."/>
            <person name="Wei C."/>
            <person name="Willey D."/>
            <person name="Wilson R.K."/>
            <person name="Durbin R.M."/>
            <person name="Waterston R.H."/>
        </authorList>
    </citation>
    <scope>NUCLEOTIDE SEQUENCE [LARGE SCALE GENOMIC DNA]</scope>
    <source>
        <strain evidence="8">AF16</strain>
    </source>
</reference>